<reference key="1">
    <citation type="journal article" date="2005" name="Nature">
        <title>Genome sequencing and analysis of Aspergillus oryzae.</title>
        <authorList>
            <person name="Machida M."/>
            <person name="Asai K."/>
            <person name="Sano M."/>
            <person name="Tanaka T."/>
            <person name="Kumagai T."/>
            <person name="Terai G."/>
            <person name="Kusumoto K."/>
            <person name="Arima T."/>
            <person name="Akita O."/>
            <person name="Kashiwagi Y."/>
            <person name="Abe K."/>
            <person name="Gomi K."/>
            <person name="Horiuchi H."/>
            <person name="Kitamoto K."/>
            <person name="Kobayashi T."/>
            <person name="Takeuchi M."/>
            <person name="Denning D.W."/>
            <person name="Galagan J.E."/>
            <person name="Nierman W.C."/>
            <person name="Yu J."/>
            <person name="Archer D.B."/>
            <person name="Bennett J.W."/>
            <person name="Bhatnagar D."/>
            <person name="Cleveland T.E."/>
            <person name="Fedorova N.D."/>
            <person name="Gotoh O."/>
            <person name="Horikawa H."/>
            <person name="Hosoyama A."/>
            <person name="Ichinomiya M."/>
            <person name="Igarashi R."/>
            <person name="Iwashita K."/>
            <person name="Juvvadi P.R."/>
            <person name="Kato M."/>
            <person name="Kato Y."/>
            <person name="Kin T."/>
            <person name="Kokubun A."/>
            <person name="Maeda H."/>
            <person name="Maeyama N."/>
            <person name="Maruyama J."/>
            <person name="Nagasaki H."/>
            <person name="Nakajima T."/>
            <person name="Oda K."/>
            <person name="Okada K."/>
            <person name="Paulsen I."/>
            <person name="Sakamoto K."/>
            <person name="Sawano T."/>
            <person name="Takahashi M."/>
            <person name="Takase K."/>
            <person name="Terabayashi Y."/>
            <person name="Wortman J.R."/>
            <person name="Yamada O."/>
            <person name="Yamagata Y."/>
            <person name="Anazawa H."/>
            <person name="Hata Y."/>
            <person name="Koide Y."/>
            <person name="Komori T."/>
            <person name="Koyama Y."/>
            <person name="Minetoki T."/>
            <person name="Suharnan S."/>
            <person name="Tanaka A."/>
            <person name="Isono K."/>
            <person name="Kuhara S."/>
            <person name="Ogasawara N."/>
            <person name="Kikuchi H."/>
        </authorList>
    </citation>
    <scope>NUCLEOTIDE SEQUENCE [LARGE SCALE GENOMIC DNA]</scope>
    <source>
        <strain>ATCC 42149 / RIB 40</strain>
    </source>
</reference>
<reference key="2">
    <citation type="journal article" date="2016" name="J. Antibiot.">
        <title>An overproduction of astellolides induced by genetic disruption of chromatin-remodeling factors in Aspergillus oryzae.</title>
        <authorList>
            <person name="Shinohara Y."/>
            <person name="Kawatani M."/>
            <person name="Futamura Y."/>
            <person name="Osada H."/>
            <person name="Koyama Y."/>
        </authorList>
    </citation>
    <scope>FUNCTION</scope>
    <scope>DISRUPTION PHENOTYPE</scope>
</reference>
<reference key="3">
    <citation type="journal article" date="2016" name="Sci. Rep.">
        <title>Identification of a novel sesquiterpene biosynthetic machinery involved in astellolide biosynthesis.</title>
        <authorList>
            <person name="Shinohara Y."/>
            <person name="Takahashi S."/>
            <person name="Osada H."/>
            <person name="Koyama Y."/>
        </authorList>
    </citation>
    <scope>FUNCTION</scope>
    <scope>DISRUPTION PHENOTYPE</scope>
</reference>
<evidence type="ECO:0000250" key="1">
    <source>
        <dbReference type="UniProtKB" id="P43132"/>
    </source>
</evidence>
<evidence type="ECO:0000255" key="2">
    <source>
        <dbReference type="PROSITE-ProRule" id="PRU00548"/>
    </source>
</evidence>
<evidence type="ECO:0000256" key="3">
    <source>
        <dbReference type="SAM" id="MobiDB-lite"/>
    </source>
</evidence>
<evidence type="ECO:0000269" key="4">
    <source>
    </source>
</evidence>
<evidence type="ECO:0000269" key="5">
    <source>
    </source>
</evidence>
<evidence type="ECO:0000303" key="6">
    <source>
    </source>
</evidence>
<evidence type="ECO:0000305" key="7"/>
<protein>
    <recommendedName>
        <fullName evidence="6">COMPASS component cclA</fullName>
    </recommendedName>
</protein>
<gene>
    <name evidence="6" type="primary">cclA</name>
    <name type="ORF">AO090124000076</name>
</gene>
<keyword id="KW-0158">Chromosome</keyword>
<keyword id="KW-0539">Nucleus</keyword>
<keyword id="KW-1185">Reference proteome</keyword>
<keyword id="KW-0779">Telomere</keyword>
<comment type="function">
    <text evidence="1 4 5">Component of the COMPASS (Set1C) complex that specifically mono-, di- and trimethylates histone H3 to form H3K4me1/2/3, which subsequently plays a role in telomere length maintenance and transcription elongation regulation (By similarity). Controls the production of several secondary metabolites, including astellolides (PubMed:26126743, PubMed:27628599).</text>
</comment>
<comment type="subunit">
    <text evidence="1">Component of the COMPASS complex.</text>
</comment>
<comment type="subcellular location">
    <subcellularLocation>
        <location evidence="7">Nucleus</location>
    </subcellularLocation>
    <subcellularLocation>
        <location evidence="7">Chromosome</location>
        <location evidence="7">Telomere</location>
    </subcellularLocation>
</comment>
<comment type="disruption phenotype">
    <text evidence="4 5">Impairs tri- and dimethylation of H3K4 (PubMed:26126743). Leads to increased production of several secondary metabolites, including astellolides (PubMed:26126743, PubMed:27628599).</text>
</comment>
<comment type="similarity">
    <text evidence="7">Belongs to the cclA family.</text>
</comment>
<name>CCLA_ASPOR</name>
<sequence>MASIQPAGSSAPSSNINSPILPPSGTPFFNGPLSDTNTRSSPAPASNASAQTDGPRSKRNKRDSRKKREAKGLDQEIVPAKKRATAVQNTALPSSDLNILRPLLLAEPRPSDLLPPQPRQLNLVSRKTSEVIGQSWSFYEVVDKLTNKNGFRYSYAIADTSFPHIKYRQTDVRPYNARFSFEDSPAAILFNEDALAVTTNGPWHTARANVCAREGTFYYEARIISGVLSDPQTAPANGKSCLPSRGHVRLGFARREADLDVNVGVDCYGYGIRDVNGEVVNRMRCEYFFPKGESIREGDVIGMLITLPPLSLHKRIVEGTYDPAVDGHASTSGIELSMATNVIRDRIPFHYKSDFCWQQSNVFPTKQLRDYAFNLKETPTFGPPSPMNTEDASLRTLPGSSITIFKNGIKMGTPFKELYAFLPPASRLANGTNNLGLGERENADDGMIGYYPAVSCYGGGAVECRFEGPWWIGPPQAENGEPIRGIGERFNEQIVEDVVADIVDEVEAMLVWGGVDGDVVGNAQMDGTGTGAVGGSEVLKGGVGAAYESAVSAVSAGPGTGPSTVENSVGNVGSPDVGTGHSTFEDAASVGVVGTPNTEEPAARPENITVGHDVEMS</sequence>
<organism>
    <name type="scientific">Aspergillus oryzae (strain ATCC 42149 / RIB 40)</name>
    <name type="common">Yellow koji mold</name>
    <dbReference type="NCBI Taxonomy" id="510516"/>
    <lineage>
        <taxon>Eukaryota</taxon>
        <taxon>Fungi</taxon>
        <taxon>Dikarya</taxon>
        <taxon>Ascomycota</taxon>
        <taxon>Pezizomycotina</taxon>
        <taxon>Eurotiomycetes</taxon>
        <taxon>Eurotiomycetidae</taxon>
        <taxon>Eurotiales</taxon>
        <taxon>Aspergillaceae</taxon>
        <taxon>Aspergillus</taxon>
        <taxon>Aspergillus subgen. Circumdati</taxon>
    </lineage>
</organism>
<accession>Q2U741</accession>
<dbReference type="EMBL" id="BA000053">
    <property type="protein sequence ID" value="BAE62624.1"/>
    <property type="molecule type" value="Genomic_DNA"/>
</dbReference>
<dbReference type="RefSeq" id="XP_001823757.1">
    <property type="nucleotide sequence ID" value="XM_001823705.2"/>
</dbReference>
<dbReference type="SMR" id="Q2U741"/>
<dbReference type="STRING" id="510516.Q2U741"/>
<dbReference type="EnsemblFungi" id="BAE62624">
    <property type="protein sequence ID" value="BAE62624"/>
    <property type="gene ID" value="AO090124000076"/>
</dbReference>
<dbReference type="GeneID" id="5995828"/>
<dbReference type="KEGG" id="aor:AO090124000076"/>
<dbReference type="VEuPathDB" id="FungiDB:AO090124000076"/>
<dbReference type="HOGENOM" id="CLU_014420_3_1_1"/>
<dbReference type="OMA" id="GFRYTYA"/>
<dbReference type="OrthoDB" id="71167at5052"/>
<dbReference type="Proteomes" id="UP000006564">
    <property type="component" value="Chromosome 5"/>
</dbReference>
<dbReference type="GO" id="GO:0000781">
    <property type="term" value="C:chromosome, telomeric region"/>
    <property type="evidence" value="ECO:0007669"/>
    <property type="project" value="UniProtKB-SubCell"/>
</dbReference>
<dbReference type="GO" id="GO:0048188">
    <property type="term" value="C:Set1C/COMPASS complex"/>
    <property type="evidence" value="ECO:0007669"/>
    <property type="project" value="InterPro"/>
</dbReference>
<dbReference type="GO" id="GO:0000976">
    <property type="term" value="F:transcription cis-regulatory region binding"/>
    <property type="evidence" value="ECO:0007669"/>
    <property type="project" value="TreeGrafter"/>
</dbReference>
<dbReference type="GO" id="GO:0040029">
    <property type="term" value="P:epigenetic regulation of gene expression"/>
    <property type="evidence" value="ECO:0000315"/>
    <property type="project" value="AspGD"/>
</dbReference>
<dbReference type="GO" id="GO:1900376">
    <property type="term" value="P:regulation of secondary metabolite biosynthetic process"/>
    <property type="evidence" value="ECO:0000315"/>
    <property type="project" value="AspGD"/>
</dbReference>
<dbReference type="CDD" id="cd12872">
    <property type="entry name" value="SPRY_Ash2"/>
    <property type="match status" value="1"/>
</dbReference>
<dbReference type="Gene3D" id="2.60.120.920">
    <property type="match status" value="1"/>
</dbReference>
<dbReference type="InterPro" id="IPR037353">
    <property type="entry name" value="ASH2"/>
</dbReference>
<dbReference type="InterPro" id="IPR043136">
    <property type="entry name" value="B30.2/SPRY_sf"/>
</dbReference>
<dbReference type="InterPro" id="IPR013320">
    <property type="entry name" value="ConA-like_dom_sf"/>
</dbReference>
<dbReference type="InterPro" id="IPR003877">
    <property type="entry name" value="SPRY_dom"/>
</dbReference>
<dbReference type="PANTHER" id="PTHR10598">
    <property type="entry name" value="SET1/ASH2 HISTONE METHYLTRANSFERASE COMPLEX SUBUNIT ASH2"/>
    <property type="match status" value="1"/>
</dbReference>
<dbReference type="PANTHER" id="PTHR10598:SF0">
    <property type="entry name" value="SET1_ASH2 HISTONE METHYLTRANSFERASE COMPLEX SUBUNIT ASH2"/>
    <property type="match status" value="1"/>
</dbReference>
<dbReference type="SMART" id="SM00449">
    <property type="entry name" value="SPRY"/>
    <property type="match status" value="1"/>
</dbReference>
<dbReference type="SUPFAM" id="SSF49899">
    <property type="entry name" value="Concanavalin A-like lectins/glucanases"/>
    <property type="match status" value="1"/>
</dbReference>
<feature type="chain" id="PRO_0000458880" description="COMPASS component cclA">
    <location>
        <begin position="1"/>
        <end position="617"/>
    </location>
</feature>
<feature type="domain" description="B30.2/SPRY" evidence="2">
    <location>
        <begin position="157"/>
        <end position="380"/>
    </location>
</feature>
<feature type="region of interest" description="Disordered" evidence="3">
    <location>
        <begin position="1"/>
        <end position="89"/>
    </location>
</feature>
<feature type="region of interest" description="Disordered" evidence="3">
    <location>
        <begin position="595"/>
        <end position="617"/>
    </location>
</feature>
<feature type="compositionally biased region" description="Low complexity" evidence="3">
    <location>
        <begin position="1"/>
        <end position="19"/>
    </location>
</feature>
<feature type="compositionally biased region" description="Low complexity" evidence="3">
    <location>
        <begin position="40"/>
        <end position="50"/>
    </location>
</feature>
<feature type="compositionally biased region" description="Basic residues" evidence="3">
    <location>
        <begin position="57"/>
        <end position="69"/>
    </location>
</feature>
<proteinExistence type="inferred from homology"/>